<gene>
    <name evidence="1" type="primary">hslV</name>
    <name type="ordered locus">ECSE_4221</name>
</gene>
<comment type="function">
    <text evidence="1">Protease subunit of a proteasome-like degradation complex believed to be a general protein degrading machinery.</text>
</comment>
<comment type="catalytic activity">
    <reaction evidence="1">
        <text>ATP-dependent cleavage of peptide bonds with broad specificity.</text>
        <dbReference type="EC" id="3.4.25.2"/>
    </reaction>
</comment>
<comment type="activity regulation">
    <text evidence="1">Allosterically activated by HslU binding.</text>
</comment>
<comment type="subunit">
    <text evidence="1">A double ring-shaped homohexamer of HslV is capped on each side by a ring-shaped HslU homohexamer. The assembly of the HslU/HslV complex is dependent on binding of ATP.</text>
</comment>
<comment type="subcellular location">
    <subcellularLocation>
        <location evidence="1">Cytoplasm</location>
    </subcellularLocation>
</comment>
<comment type="induction">
    <text evidence="1">By heat shock.</text>
</comment>
<comment type="similarity">
    <text evidence="1">Belongs to the peptidase T1B family. HslV subfamily.</text>
</comment>
<feature type="chain" id="PRO_1000100892" description="ATP-dependent protease subunit HslV">
    <location>
        <begin position="1"/>
        <end position="176"/>
    </location>
</feature>
<feature type="active site" evidence="1">
    <location>
        <position position="2"/>
    </location>
</feature>
<feature type="binding site" evidence="1">
    <location>
        <position position="157"/>
    </location>
    <ligand>
        <name>Na(+)</name>
        <dbReference type="ChEBI" id="CHEBI:29101"/>
    </ligand>
</feature>
<feature type="binding site" evidence="1">
    <location>
        <position position="160"/>
    </location>
    <ligand>
        <name>Na(+)</name>
        <dbReference type="ChEBI" id="CHEBI:29101"/>
    </ligand>
</feature>
<feature type="binding site" evidence="1">
    <location>
        <position position="163"/>
    </location>
    <ligand>
        <name>Na(+)</name>
        <dbReference type="ChEBI" id="CHEBI:29101"/>
    </ligand>
</feature>
<reference key="1">
    <citation type="journal article" date="2008" name="DNA Res.">
        <title>Complete genome sequence and comparative analysis of the wild-type commensal Escherichia coli strain SE11 isolated from a healthy adult.</title>
        <authorList>
            <person name="Oshima K."/>
            <person name="Toh H."/>
            <person name="Ogura Y."/>
            <person name="Sasamoto H."/>
            <person name="Morita H."/>
            <person name="Park S.-H."/>
            <person name="Ooka T."/>
            <person name="Iyoda S."/>
            <person name="Taylor T.D."/>
            <person name="Hayashi T."/>
            <person name="Itoh K."/>
            <person name="Hattori M."/>
        </authorList>
    </citation>
    <scope>NUCLEOTIDE SEQUENCE [LARGE SCALE GENOMIC DNA]</scope>
    <source>
        <strain>SE11</strain>
    </source>
</reference>
<proteinExistence type="inferred from homology"/>
<organism>
    <name type="scientific">Escherichia coli (strain SE11)</name>
    <dbReference type="NCBI Taxonomy" id="409438"/>
    <lineage>
        <taxon>Bacteria</taxon>
        <taxon>Pseudomonadati</taxon>
        <taxon>Pseudomonadota</taxon>
        <taxon>Gammaproteobacteria</taxon>
        <taxon>Enterobacterales</taxon>
        <taxon>Enterobacteriaceae</taxon>
        <taxon>Escherichia</taxon>
    </lineage>
</organism>
<protein>
    <recommendedName>
        <fullName evidence="1">ATP-dependent protease subunit HslV</fullName>
        <ecNumber evidence="1">3.4.25.2</ecNumber>
    </recommendedName>
    <alternativeName>
        <fullName evidence="1">Heat shock protein HslV</fullName>
    </alternativeName>
</protein>
<accession>B6I4S5</accession>
<name>HSLV_ECOSE</name>
<dbReference type="EC" id="3.4.25.2" evidence="1"/>
<dbReference type="EMBL" id="AP009240">
    <property type="protein sequence ID" value="BAG79745.1"/>
    <property type="molecule type" value="Genomic_DNA"/>
</dbReference>
<dbReference type="RefSeq" id="WP_000208242.1">
    <property type="nucleotide sequence ID" value="NC_011415.1"/>
</dbReference>
<dbReference type="SMR" id="B6I4S5"/>
<dbReference type="MEROPS" id="T01.006"/>
<dbReference type="GeneID" id="93777966"/>
<dbReference type="KEGG" id="ecy:ECSE_4221"/>
<dbReference type="HOGENOM" id="CLU_093872_1_0_6"/>
<dbReference type="Proteomes" id="UP000008199">
    <property type="component" value="Chromosome"/>
</dbReference>
<dbReference type="GO" id="GO:0009376">
    <property type="term" value="C:HslUV protease complex"/>
    <property type="evidence" value="ECO:0007669"/>
    <property type="project" value="UniProtKB-UniRule"/>
</dbReference>
<dbReference type="GO" id="GO:0005839">
    <property type="term" value="C:proteasome core complex"/>
    <property type="evidence" value="ECO:0007669"/>
    <property type="project" value="InterPro"/>
</dbReference>
<dbReference type="GO" id="GO:0046872">
    <property type="term" value="F:metal ion binding"/>
    <property type="evidence" value="ECO:0007669"/>
    <property type="project" value="UniProtKB-KW"/>
</dbReference>
<dbReference type="GO" id="GO:0004298">
    <property type="term" value="F:threonine-type endopeptidase activity"/>
    <property type="evidence" value="ECO:0007669"/>
    <property type="project" value="UniProtKB-KW"/>
</dbReference>
<dbReference type="GO" id="GO:0051603">
    <property type="term" value="P:proteolysis involved in protein catabolic process"/>
    <property type="evidence" value="ECO:0007669"/>
    <property type="project" value="InterPro"/>
</dbReference>
<dbReference type="CDD" id="cd01913">
    <property type="entry name" value="protease_HslV"/>
    <property type="match status" value="1"/>
</dbReference>
<dbReference type="FunFam" id="3.60.20.10:FF:000002">
    <property type="entry name" value="ATP-dependent protease subunit HslV"/>
    <property type="match status" value="1"/>
</dbReference>
<dbReference type="Gene3D" id="3.60.20.10">
    <property type="entry name" value="Glutamine Phosphoribosylpyrophosphate, subunit 1, domain 1"/>
    <property type="match status" value="1"/>
</dbReference>
<dbReference type="HAMAP" id="MF_00248">
    <property type="entry name" value="HslV"/>
    <property type="match status" value="1"/>
</dbReference>
<dbReference type="InterPro" id="IPR022281">
    <property type="entry name" value="ATP-dep_Prtase_HsIV_su"/>
</dbReference>
<dbReference type="InterPro" id="IPR029055">
    <property type="entry name" value="Ntn_hydrolases_N"/>
</dbReference>
<dbReference type="InterPro" id="IPR001353">
    <property type="entry name" value="Proteasome_sua/b"/>
</dbReference>
<dbReference type="InterPro" id="IPR023333">
    <property type="entry name" value="Proteasome_suB-type"/>
</dbReference>
<dbReference type="NCBIfam" id="TIGR03692">
    <property type="entry name" value="ATP_dep_HslV"/>
    <property type="match status" value="1"/>
</dbReference>
<dbReference type="NCBIfam" id="NF003964">
    <property type="entry name" value="PRK05456.1"/>
    <property type="match status" value="1"/>
</dbReference>
<dbReference type="PANTHER" id="PTHR32194:SF0">
    <property type="entry name" value="ATP-DEPENDENT PROTEASE SUBUNIT HSLV"/>
    <property type="match status" value="1"/>
</dbReference>
<dbReference type="PANTHER" id="PTHR32194">
    <property type="entry name" value="METALLOPROTEASE TLDD"/>
    <property type="match status" value="1"/>
</dbReference>
<dbReference type="Pfam" id="PF00227">
    <property type="entry name" value="Proteasome"/>
    <property type="match status" value="1"/>
</dbReference>
<dbReference type="PIRSF" id="PIRSF039093">
    <property type="entry name" value="HslV"/>
    <property type="match status" value="1"/>
</dbReference>
<dbReference type="SUPFAM" id="SSF56235">
    <property type="entry name" value="N-terminal nucleophile aminohydrolases (Ntn hydrolases)"/>
    <property type="match status" value="1"/>
</dbReference>
<dbReference type="PROSITE" id="PS51476">
    <property type="entry name" value="PROTEASOME_BETA_2"/>
    <property type="match status" value="1"/>
</dbReference>
<evidence type="ECO:0000255" key="1">
    <source>
        <dbReference type="HAMAP-Rule" id="MF_00248"/>
    </source>
</evidence>
<keyword id="KW-0021">Allosteric enzyme</keyword>
<keyword id="KW-0963">Cytoplasm</keyword>
<keyword id="KW-0378">Hydrolase</keyword>
<keyword id="KW-0479">Metal-binding</keyword>
<keyword id="KW-0645">Protease</keyword>
<keyword id="KW-0915">Sodium</keyword>
<keyword id="KW-0346">Stress response</keyword>
<keyword id="KW-0888">Threonine protease</keyword>
<sequence>MTTIVSVRRNGHVVIAGDGQATLGNTVMKGNVKKVRRLYNDKVIAGFAGGTADAFTLFELFERKLEMHQGHLVKAAVELAKDWRTDRMLRKLEALLAVADETASLIITGNGDVVQPENDLIAIGSGGPYAQAAARALLENTELSAREIAEKALDIAGDICIYTNHFHTIEELSYKA</sequence>